<accession>A4W577</accession>
<protein>
    <recommendedName>
        <fullName evidence="1">Glyoxylate/hydroxypyruvate reductase B</fullName>
        <ecNumber evidence="1">1.1.1.79</ecNumber>
        <ecNumber evidence="1">1.1.1.81</ecNumber>
    </recommendedName>
</protein>
<dbReference type="EC" id="1.1.1.79" evidence="1"/>
<dbReference type="EC" id="1.1.1.81" evidence="1"/>
<dbReference type="EMBL" id="CP000653">
    <property type="protein sequence ID" value="ABP58857.1"/>
    <property type="molecule type" value="Genomic_DNA"/>
</dbReference>
<dbReference type="RefSeq" id="WP_011915432.1">
    <property type="nucleotide sequence ID" value="NC_009436.1"/>
</dbReference>
<dbReference type="SMR" id="A4W577"/>
<dbReference type="STRING" id="399742.Ent638_0167"/>
<dbReference type="KEGG" id="ent:Ent638_0167"/>
<dbReference type="eggNOG" id="COG1052">
    <property type="taxonomic scope" value="Bacteria"/>
</dbReference>
<dbReference type="HOGENOM" id="CLU_019796_1_2_6"/>
<dbReference type="OrthoDB" id="9805416at2"/>
<dbReference type="Proteomes" id="UP000000230">
    <property type="component" value="Chromosome"/>
</dbReference>
<dbReference type="GO" id="GO:0005829">
    <property type="term" value="C:cytosol"/>
    <property type="evidence" value="ECO:0007669"/>
    <property type="project" value="TreeGrafter"/>
</dbReference>
<dbReference type="GO" id="GO:0005886">
    <property type="term" value="C:plasma membrane"/>
    <property type="evidence" value="ECO:0007669"/>
    <property type="project" value="UniProtKB-UniRule"/>
</dbReference>
<dbReference type="GO" id="GO:0030267">
    <property type="term" value="F:glyoxylate reductase (NADPH) activity"/>
    <property type="evidence" value="ECO:0007669"/>
    <property type="project" value="UniProtKB-UniRule"/>
</dbReference>
<dbReference type="GO" id="GO:0008465">
    <property type="term" value="F:hydroxypyruvate reductase (NADH) activity"/>
    <property type="evidence" value="ECO:0007669"/>
    <property type="project" value="RHEA"/>
</dbReference>
<dbReference type="GO" id="GO:0120509">
    <property type="term" value="F:hydroxypyruvate reductase (NADPH) activity"/>
    <property type="evidence" value="ECO:0007669"/>
    <property type="project" value="RHEA"/>
</dbReference>
<dbReference type="GO" id="GO:0051287">
    <property type="term" value="F:NAD binding"/>
    <property type="evidence" value="ECO:0007669"/>
    <property type="project" value="InterPro"/>
</dbReference>
<dbReference type="CDD" id="cd05301">
    <property type="entry name" value="GDH"/>
    <property type="match status" value="1"/>
</dbReference>
<dbReference type="FunFam" id="3.40.50.720:FF:000026">
    <property type="entry name" value="Glyoxylate/hydroxypyruvate reductase B"/>
    <property type="match status" value="1"/>
</dbReference>
<dbReference type="Gene3D" id="3.40.50.720">
    <property type="entry name" value="NAD(P)-binding Rossmann-like Domain"/>
    <property type="match status" value="2"/>
</dbReference>
<dbReference type="HAMAP" id="MF_01667">
    <property type="entry name" value="2_Hacid_dh_C_GhrB"/>
    <property type="match status" value="1"/>
</dbReference>
<dbReference type="InterPro" id="IPR050223">
    <property type="entry name" value="D-isomer_2-hydroxyacid_DH"/>
</dbReference>
<dbReference type="InterPro" id="IPR006139">
    <property type="entry name" value="D-isomer_2_OHA_DH_cat_dom"/>
</dbReference>
<dbReference type="InterPro" id="IPR029753">
    <property type="entry name" value="D-isomer_DH_CS"/>
</dbReference>
<dbReference type="InterPro" id="IPR006140">
    <property type="entry name" value="D-isomer_DH_NAD-bd"/>
</dbReference>
<dbReference type="InterPro" id="IPR023756">
    <property type="entry name" value="Glyo/OHPyrv_Rdtase_B"/>
</dbReference>
<dbReference type="InterPro" id="IPR036291">
    <property type="entry name" value="NAD(P)-bd_dom_sf"/>
</dbReference>
<dbReference type="NCBIfam" id="NF011938">
    <property type="entry name" value="PRK15409.1"/>
    <property type="match status" value="1"/>
</dbReference>
<dbReference type="PANTHER" id="PTHR10996">
    <property type="entry name" value="2-HYDROXYACID DEHYDROGENASE-RELATED"/>
    <property type="match status" value="1"/>
</dbReference>
<dbReference type="PANTHER" id="PTHR10996:SF283">
    <property type="entry name" value="GLYOXYLATE_HYDROXYPYRUVATE REDUCTASE B"/>
    <property type="match status" value="1"/>
</dbReference>
<dbReference type="Pfam" id="PF00389">
    <property type="entry name" value="2-Hacid_dh"/>
    <property type="match status" value="1"/>
</dbReference>
<dbReference type="Pfam" id="PF02826">
    <property type="entry name" value="2-Hacid_dh_C"/>
    <property type="match status" value="1"/>
</dbReference>
<dbReference type="SUPFAM" id="SSF52283">
    <property type="entry name" value="Formate/glycerate dehydrogenase catalytic domain-like"/>
    <property type="match status" value="1"/>
</dbReference>
<dbReference type="SUPFAM" id="SSF51735">
    <property type="entry name" value="NAD(P)-binding Rossmann-fold domains"/>
    <property type="match status" value="1"/>
</dbReference>
<dbReference type="PROSITE" id="PS00671">
    <property type="entry name" value="D_2_HYDROXYACID_DH_3"/>
    <property type="match status" value="1"/>
</dbReference>
<evidence type="ECO:0000255" key="1">
    <source>
        <dbReference type="HAMAP-Rule" id="MF_01667"/>
    </source>
</evidence>
<sequence length="324" mass="35661">MKPSVILYKTLPDDLQKRLEEHFTVTQMKNLNPETVAEHADAFASAAGLLGSSEKVDTALLEKMPKLRATSTISVGYDNFDVDALNTRKILLMHTPYALTETVADTLMALVLSTARRVVEVAERVKAGEWTKSIGPDWFGVDVHGKTLGIVGMGRIGLALAQRAHFGFNMPILYNARRHHSEAEERFEARYCELETLLQEADYVCLILPLTDETHHLIGKAEFEKMKKSAIFINAGRGPVVDEKALIEALQKGEIHAAGLDVFEQEPLPVDSPLLTMSNVVSLPHIGSATHETRYNMAATAVDNLINALNGNVEKNCVNPHVNA</sequence>
<organism>
    <name type="scientific">Enterobacter sp. (strain 638)</name>
    <dbReference type="NCBI Taxonomy" id="399742"/>
    <lineage>
        <taxon>Bacteria</taxon>
        <taxon>Pseudomonadati</taxon>
        <taxon>Pseudomonadota</taxon>
        <taxon>Gammaproteobacteria</taxon>
        <taxon>Enterobacterales</taxon>
        <taxon>Enterobacteriaceae</taxon>
        <taxon>Enterobacter</taxon>
    </lineage>
</organism>
<keyword id="KW-0963">Cytoplasm</keyword>
<keyword id="KW-0520">NAD</keyword>
<keyword id="KW-0521">NADP</keyword>
<keyword id="KW-0560">Oxidoreductase</keyword>
<gene>
    <name evidence="1" type="primary">ghrB</name>
    <name type="ordered locus">Ent638_0167</name>
</gene>
<name>GHRB_ENT38</name>
<reference key="1">
    <citation type="journal article" date="2010" name="PLoS Genet.">
        <title>Genome sequence of the plant growth promoting endophytic bacterium Enterobacter sp. 638.</title>
        <authorList>
            <person name="Taghavi S."/>
            <person name="van der Lelie D."/>
            <person name="Hoffman A."/>
            <person name="Zhang Y.B."/>
            <person name="Walla M.D."/>
            <person name="Vangronsveld J."/>
            <person name="Newman L."/>
            <person name="Monchy S."/>
        </authorList>
    </citation>
    <scope>NUCLEOTIDE SEQUENCE [LARGE SCALE GENOMIC DNA]</scope>
    <source>
        <strain>638</strain>
    </source>
</reference>
<feature type="chain" id="PRO_0000348381" description="Glyoxylate/hydroxypyruvate reductase B">
    <location>
        <begin position="1"/>
        <end position="324"/>
    </location>
</feature>
<feature type="active site" evidence="1">
    <location>
        <position position="237"/>
    </location>
</feature>
<feature type="active site" evidence="1">
    <location>
        <position position="266"/>
    </location>
</feature>
<feature type="active site" description="Proton donor" evidence="1">
    <location>
        <position position="285"/>
    </location>
</feature>
<proteinExistence type="inferred from homology"/>
<comment type="function">
    <text evidence="1">Catalyzes the NADPH-dependent reduction of glyoxylate and hydroxypyruvate into glycolate and glycerate, respectively.</text>
</comment>
<comment type="catalytic activity">
    <reaction evidence="1">
        <text>glycolate + NADP(+) = glyoxylate + NADPH + H(+)</text>
        <dbReference type="Rhea" id="RHEA:10992"/>
        <dbReference type="ChEBI" id="CHEBI:15378"/>
        <dbReference type="ChEBI" id="CHEBI:29805"/>
        <dbReference type="ChEBI" id="CHEBI:36655"/>
        <dbReference type="ChEBI" id="CHEBI:57783"/>
        <dbReference type="ChEBI" id="CHEBI:58349"/>
        <dbReference type="EC" id="1.1.1.79"/>
    </reaction>
</comment>
<comment type="catalytic activity">
    <reaction evidence="1">
        <text>(R)-glycerate + NAD(+) = 3-hydroxypyruvate + NADH + H(+)</text>
        <dbReference type="Rhea" id="RHEA:17905"/>
        <dbReference type="ChEBI" id="CHEBI:15378"/>
        <dbReference type="ChEBI" id="CHEBI:16659"/>
        <dbReference type="ChEBI" id="CHEBI:17180"/>
        <dbReference type="ChEBI" id="CHEBI:57540"/>
        <dbReference type="ChEBI" id="CHEBI:57945"/>
        <dbReference type="EC" id="1.1.1.81"/>
    </reaction>
</comment>
<comment type="catalytic activity">
    <reaction evidence="1">
        <text>(R)-glycerate + NADP(+) = 3-hydroxypyruvate + NADPH + H(+)</text>
        <dbReference type="Rhea" id="RHEA:18657"/>
        <dbReference type="ChEBI" id="CHEBI:15378"/>
        <dbReference type="ChEBI" id="CHEBI:16659"/>
        <dbReference type="ChEBI" id="CHEBI:17180"/>
        <dbReference type="ChEBI" id="CHEBI:57783"/>
        <dbReference type="ChEBI" id="CHEBI:58349"/>
        <dbReference type="EC" id="1.1.1.81"/>
    </reaction>
</comment>
<comment type="subunit">
    <text evidence="1">Homodimer.</text>
</comment>
<comment type="subcellular location">
    <subcellularLocation>
        <location evidence="1">Cytoplasm</location>
    </subcellularLocation>
</comment>
<comment type="similarity">
    <text evidence="1">Belongs to the D-isomer specific 2-hydroxyacid dehydrogenase family. GhrB subfamily.</text>
</comment>